<gene>
    <name evidence="1" type="primary">bioF</name>
    <name type="ordered locus">Maqu_2755</name>
</gene>
<dbReference type="EC" id="2.3.1.47" evidence="1"/>
<dbReference type="EMBL" id="CP000514">
    <property type="protein sequence ID" value="ABM19830.1"/>
    <property type="molecule type" value="Genomic_DNA"/>
</dbReference>
<dbReference type="RefSeq" id="WP_011786200.1">
    <property type="nucleotide sequence ID" value="NC_008740.1"/>
</dbReference>
<dbReference type="SMR" id="A1U4B1"/>
<dbReference type="STRING" id="351348.Maqu_2755"/>
<dbReference type="KEGG" id="maq:Maqu_2755"/>
<dbReference type="eggNOG" id="COG0156">
    <property type="taxonomic scope" value="Bacteria"/>
</dbReference>
<dbReference type="HOGENOM" id="CLU_015846_11_2_6"/>
<dbReference type="OrthoDB" id="9807157at2"/>
<dbReference type="UniPathway" id="UPA00078"/>
<dbReference type="Proteomes" id="UP000000998">
    <property type="component" value="Chromosome"/>
</dbReference>
<dbReference type="GO" id="GO:0008710">
    <property type="term" value="F:8-amino-7-oxononanoate synthase activity"/>
    <property type="evidence" value="ECO:0007669"/>
    <property type="project" value="UniProtKB-UniRule"/>
</dbReference>
<dbReference type="GO" id="GO:0030170">
    <property type="term" value="F:pyridoxal phosphate binding"/>
    <property type="evidence" value="ECO:0007669"/>
    <property type="project" value="UniProtKB-UniRule"/>
</dbReference>
<dbReference type="GO" id="GO:0009102">
    <property type="term" value="P:biotin biosynthetic process"/>
    <property type="evidence" value="ECO:0007669"/>
    <property type="project" value="UniProtKB-UniRule"/>
</dbReference>
<dbReference type="CDD" id="cd06454">
    <property type="entry name" value="KBL_like"/>
    <property type="match status" value="1"/>
</dbReference>
<dbReference type="Gene3D" id="3.90.1150.10">
    <property type="entry name" value="Aspartate Aminotransferase, domain 1"/>
    <property type="match status" value="1"/>
</dbReference>
<dbReference type="Gene3D" id="3.40.640.10">
    <property type="entry name" value="Type I PLP-dependent aspartate aminotransferase-like (Major domain)"/>
    <property type="match status" value="1"/>
</dbReference>
<dbReference type="HAMAP" id="MF_01693">
    <property type="entry name" value="BioF_aminotrans_2"/>
    <property type="match status" value="1"/>
</dbReference>
<dbReference type="InterPro" id="IPR001917">
    <property type="entry name" value="Aminotrans_II_pyridoxalP_BS"/>
</dbReference>
<dbReference type="InterPro" id="IPR004839">
    <property type="entry name" value="Aminotransferase_I/II_large"/>
</dbReference>
<dbReference type="InterPro" id="IPR050087">
    <property type="entry name" value="AON_synthase_class-II"/>
</dbReference>
<dbReference type="InterPro" id="IPR004723">
    <property type="entry name" value="AONS_Archaea/Proteobacteria"/>
</dbReference>
<dbReference type="InterPro" id="IPR022834">
    <property type="entry name" value="AONS_Proteobacteria"/>
</dbReference>
<dbReference type="InterPro" id="IPR015424">
    <property type="entry name" value="PyrdxlP-dep_Trfase"/>
</dbReference>
<dbReference type="InterPro" id="IPR015421">
    <property type="entry name" value="PyrdxlP-dep_Trfase_major"/>
</dbReference>
<dbReference type="InterPro" id="IPR015422">
    <property type="entry name" value="PyrdxlP-dep_Trfase_small"/>
</dbReference>
<dbReference type="NCBIfam" id="TIGR00858">
    <property type="entry name" value="bioF"/>
    <property type="match status" value="1"/>
</dbReference>
<dbReference type="PANTHER" id="PTHR13693:SF100">
    <property type="entry name" value="8-AMINO-7-OXONONANOATE SYNTHASE"/>
    <property type="match status" value="1"/>
</dbReference>
<dbReference type="PANTHER" id="PTHR13693">
    <property type="entry name" value="CLASS II AMINOTRANSFERASE/8-AMINO-7-OXONONANOATE SYNTHASE"/>
    <property type="match status" value="1"/>
</dbReference>
<dbReference type="Pfam" id="PF00155">
    <property type="entry name" value="Aminotran_1_2"/>
    <property type="match status" value="1"/>
</dbReference>
<dbReference type="SUPFAM" id="SSF53383">
    <property type="entry name" value="PLP-dependent transferases"/>
    <property type="match status" value="1"/>
</dbReference>
<dbReference type="PROSITE" id="PS00599">
    <property type="entry name" value="AA_TRANSFER_CLASS_2"/>
    <property type="match status" value="1"/>
</dbReference>
<evidence type="ECO:0000255" key="1">
    <source>
        <dbReference type="HAMAP-Rule" id="MF_01693"/>
    </source>
</evidence>
<proteinExistence type="inferred from homology"/>
<keyword id="KW-0093">Biotin biosynthesis</keyword>
<keyword id="KW-0663">Pyridoxal phosphate</keyword>
<keyword id="KW-0808">Transferase</keyword>
<organism>
    <name type="scientific">Marinobacter nauticus (strain ATCC 700491 / DSM 11845 / VT8)</name>
    <name type="common">Marinobacter aquaeolei</name>
    <dbReference type="NCBI Taxonomy" id="351348"/>
    <lineage>
        <taxon>Bacteria</taxon>
        <taxon>Pseudomonadati</taxon>
        <taxon>Pseudomonadota</taxon>
        <taxon>Gammaproteobacteria</taxon>
        <taxon>Pseudomonadales</taxon>
        <taxon>Marinobacteraceae</taxon>
        <taxon>Marinobacter</taxon>
    </lineage>
</organism>
<reference key="1">
    <citation type="journal article" date="2011" name="Appl. Environ. Microbiol.">
        <title>Genomic potential of Marinobacter aquaeolei, a biogeochemical 'opportunitroph'.</title>
        <authorList>
            <person name="Singer E."/>
            <person name="Webb E.A."/>
            <person name="Nelson W.C."/>
            <person name="Heidelberg J.F."/>
            <person name="Ivanova N."/>
            <person name="Pati A."/>
            <person name="Edwards K.J."/>
        </authorList>
    </citation>
    <scope>NUCLEOTIDE SEQUENCE [LARGE SCALE GENOMIC DNA]</scope>
    <source>
        <strain>ATCC 700491 / DSM 11845 / VT8</strain>
    </source>
</reference>
<comment type="function">
    <text evidence="1">Catalyzes the decarboxylative condensation of pimeloyl-[acyl-carrier protein] and L-alanine to produce 8-amino-7-oxononanoate (AON), [acyl-carrier protein], and carbon dioxide.</text>
</comment>
<comment type="catalytic activity">
    <reaction evidence="1">
        <text>6-carboxyhexanoyl-[ACP] + L-alanine + H(+) = (8S)-8-amino-7-oxononanoate + holo-[ACP] + CO2</text>
        <dbReference type="Rhea" id="RHEA:42288"/>
        <dbReference type="Rhea" id="RHEA-COMP:9685"/>
        <dbReference type="Rhea" id="RHEA-COMP:9955"/>
        <dbReference type="ChEBI" id="CHEBI:15378"/>
        <dbReference type="ChEBI" id="CHEBI:16526"/>
        <dbReference type="ChEBI" id="CHEBI:57972"/>
        <dbReference type="ChEBI" id="CHEBI:64479"/>
        <dbReference type="ChEBI" id="CHEBI:78846"/>
        <dbReference type="ChEBI" id="CHEBI:149468"/>
        <dbReference type="EC" id="2.3.1.47"/>
    </reaction>
</comment>
<comment type="cofactor">
    <cofactor evidence="1">
        <name>pyridoxal 5'-phosphate</name>
        <dbReference type="ChEBI" id="CHEBI:597326"/>
    </cofactor>
</comment>
<comment type="pathway">
    <text evidence="1">Cofactor biosynthesis; biotin biosynthesis.</text>
</comment>
<comment type="subunit">
    <text evidence="1">Homodimer.</text>
</comment>
<comment type="similarity">
    <text evidence="1">Belongs to the class-II pyridoxal-phosphate-dependent aminotransferase family. BioF subfamily.</text>
</comment>
<accession>A1U4B1</accession>
<feature type="chain" id="PRO_0000381017" description="8-amino-7-oxononanoate synthase">
    <location>
        <begin position="1"/>
        <end position="394"/>
    </location>
</feature>
<feature type="binding site" evidence="1">
    <location>
        <position position="18"/>
    </location>
    <ligand>
        <name>substrate</name>
    </ligand>
</feature>
<feature type="binding site" evidence="1">
    <location>
        <begin position="105"/>
        <end position="106"/>
    </location>
    <ligand>
        <name>pyridoxal 5'-phosphate</name>
        <dbReference type="ChEBI" id="CHEBI:597326"/>
    </ligand>
</feature>
<feature type="binding site" evidence="1">
    <location>
        <position position="130"/>
    </location>
    <ligand>
        <name>substrate</name>
    </ligand>
</feature>
<feature type="binding site" evidence="1">
    <location>
        <position position="175"/>
    </location>
    <ligand>
        <name>pyridoxal 5'-phosphate</name>
        <dbReference type="ChEBI" id="CHEBI:597326"/>
    </ligand>
</feature>
<feature type="binding site" evidence="1">
    <location>
        <position position="203"/>
    </location>
    <ligand>
        <name>pyridoxal 5'-phosphate</name>
        <dbReference type="ChEBI" id="CHEBI:597326"/>
    </ligand>
</feature>
<feature type="binding site" evidence="1">
    <location>
        <position position="232"/>
    </location>
    <ligand>
        <name>pyridoxal 5'-phosphate</name>
        <dbReference type="ChEBI" id="CHEBI:597326"/>
    </ligand>
</feature>
<feature type="binding site" evidence="1">
    <location>
        <position position="349"/>
    </location>
    <ligand>
        <name>substrate</name>
    </ligand>
</feature>
<feature type="modified residue" description="N6-(pyridoxal phosphate)lysine" evidence="1">
    <location>
        <position position="235"/>
    </location>
</feature>
<name>BIOF_MARN8</name>
<sequence length="394" mass="42038">MRDFAKEIEQRKQAGLYRTRRLIAGPQQPTLTADGRSLLSFCSNDYLGLASHGENMRALEQALPEVGLGGAASHLVCGHHEAHHRLEQRLAAFTRRSSALFFSTGYMANMGVISALAGRGDTIFSDRLNHASIIDGCILSRARVRRYAHGDVAALETMLSETSGHKLVVTDGVFSMDGDIAPLTELARVCKAHDALLVVDDAHGVGVLGPQGRGSVLEAGLCQEDVPVLIGTLGKGVGTSGAFVAGSDVLIDYLVQKARTYIYTTAMPPALAAATCASLDAVESGDERRAHLDALIQRFRAGAQDLGYELMSSRTPIQPIMIGDNWTALALSRALEDEGLLVTAIRPPTVPEGEARLRVTLSAAHTEADVDRLLRALAKSRSVLSEAVAREPAL</sequence>
<protein>
    <recommendedName>
        <fullName evidence="1">8-amino-7-oxononanoate synthase</fullName>
        <shortName evidence="1">AONS</shortName>
        <ecNumber evidence="1">2.3.1.47</ecNumber>
    </recommendedName>
    <alternativeName>
        <fullName evidence="1">7-keto-8-amino-pelargonic acid synthase</fullName>
        <shortName evidence="1">7-KAP synthase</shortName>
        <shortName evidence="1">KAPA synthase</shortName>
    </alternativeName>
    <alternativeName>
        <fullName evidence="1">8-amino-7-ketopelargonate synthase</fullName>
    </alternativeName>
</protein>